<dbReference type="EC" id="1.-.-.-" evidence="8"/>
<dbReference type="EMBL" id="AAHF01000007">
    <property type="protein sequence ID" value="EAL87810.1"/>
    <property type="molecule type" value="Genomic_DNA"/>
</dbReference>
<dbReference type="RefSeq" id="XP_749848.1">
    <property type="nucleotide sequence ID" value="XM_744755.1"/>
</dbReference>
<dbReference type="SMR" id="Q4WKX2"/>
<dbReference type="STRING" id="330879.Q4WKX2"/>
<dbReference type="EnsemblFungi" id="EAL87810">
    <property type="protein sequence ID" value="EAL87810"/>
    <property type="gene ID" value="AFUA_1G00980"/>
</dbReference>
<dbReference type="GeneID" id="3507516"/>
<dbReference type="KEGG" id="afm:AFUA_1G00980"/>
<dbReference type="VEuPathDB" id="FungiDB:Afu1g00980"/>
<dbReference type="HOGENOM" id="CLU_018354_0_1_1"/>
<dbReference type="InParanoid" id="Q4WKX2"/>
<dbReference type="OMA" id="SVFFIEH"/>
<dbReference type="OrthoDB" id="415825at2759"/>
<dbReference type="Proteomes" id="UP000002530">
    <property type="component" value="Chromosome 1"/>
</dbReference>
<dbReference type="GO" id="GO:0071949">
    <property type="term" value="F:FAD binding"/>
    <property type="evidence" value="ECO:0007669"/>
    <property type="project" value="InterPro"/>
</dbReference>
<dbReference type="GO" id="GO:0016491">
    <property type="term" value="F:oxidoreductase activity"/>
    <property type="evidence" value="ECO:0007669"/>
    <property type="project" value="UniProtKB-KW"/>
</dbReference>
<dbReference type="Gene3D" id="3.30.465.10">
    <property type="match status" value="1"/>
</dbReference>
<dbReference type="Gene3D" id="3.40.462.20">
    <property type="match status" value="1"/>
</dbReference>
<dbReference type="InterPro" id="IPR012951">
    <property type="entry name" value="BBE"/>
</dbReference>
<dbReference type="InterPro" id="IPR016166">
    <property type="entry name" value="FAD-bd_PCMH"/>
</dbReference>
<dbReference type="InterPro" id="IPR036318">
    <property type="entry name" value="FAD-bd_PCMH-like_sf"/>
</dbReference>
<dbReference type="InterPro" id="IPR016169">
    <property type="entry name" value="FAD-bd_PCMH_sub2"/>
</dbReference>
<dbReference type="InterPro" id="IPR050416">
    <property type="entry name" value="FAD-linked_Oxidoreductase"/>
</dbReference>
<dbReference type="InterPro" id="IPR006094">
    <property type="entry name" value="Oxid_FAD_bind_N"/>
</dbReference>
<dbReference type="PANTHER" id="PTHR42973">
    <property type="entry name" value="BINDING OXIDOREDUCTASE, PUTATIVE (AFU_ORTHOLOGUE AFUA_1G17690)-RELATED"/>
    <property type="match status" value="1"/>
</dbReference>
<dbReference type="PANTHER" id="PTHR42973:SF9">
    <property type="entry name" value="FAD-BINDING PCMH-TYPE DOMAIN-CONTAINING PROTEIN-RELATED"/>
    <property type="match status" value="1"/>
</dbReference>
<dbReference type="Pfam" id="PF08031">
    <property type="entry name" value="BBE"/>
    <property type="match status" value="1"/>
</dbReference>
<dbReference type="Pfam" id="PF01565">
    <property type="entry name" value="FAD_binding_4"/>
    <property type="match status" value="1"/>
</dbReference>
<dbReference type="SUPFAM" id="SSF56176">
    <property type="entry name" value="FAD-binding/transporter-associated domain-like"/>
    <property type="match status" value="1"/>
</dbReference>
<dbReference type="PROSITE" id="PS51387">
    <property type="entry name" value="FAD_PCMH"/>
    <property type="match status" value="1"/>
</dbReference>
<reference key="1">
    <citation type="journal article" date="2005" name="Nature">
        <title>Genomic sequence of the pathogenic and allergenic filamentous fungus Aspergillus fumigatus.</title>
        <authorList>
            <person name="Nierman W.C."/>
            <person name="Pain A."/>
            <person name="Anderson M.J."/>
            <person name="Wortman J.R."/>
            <person name="Kim H.S."/>
            <person name="Arroyo J."/>
            <person name="Berriman M."/>
            <person name="Abe K."/>
            <person name="Archer D.B."/>
            <person name="Bermejo C."/>
            <person name="Bennett J.W."/>
            <person name="Bowyer P."/>
            <person name="Chen D."/>
            <person name="Collins M."/>
            <person name="Coulsen R."/>
            <person name="Davies R."/>
            <person name="Dyer P.S."/>
            <person name="Farman M.L."/>
            <person name="Fedorova N."/>
            <person name="Fedorova N.D."/>
            <person name="Feldblyum T.V."/>
            <person name="Fischer R."/>
            <person name="Fosker N."/>
            <person name="Fraser A."/>
            <person name="Garcia J.L."/>
            <person name="Garcia M.J."/>
            <person name="Goble A."/>
            <person name="Goldman G.H."/>
            <person name="Gomi K."/>
            <person name="Griffith-Jones S."/>
            <person name="Gwilliam R."/>
            <person name="Haas B.J."/>
            <person name="Haas H."/>
            <person name="Harris D.E."/>
            <person name="Horiuchi H."/>
            <person name="Huang J."/>
            <person name="Humphray S."/>
            <person name="Jimenez J."/>
            <person name="Keller N."/>
            <person name="Khouri H."/>
            <person name="Kitamoto K."/>
            <person name="Kobayashi T."/>
            <person name="Konzack S."/>
            <person name="Kulkarni R."/>
            <person name="Kumagai T."/>
            <person name="Lafton A."/>
            <person name="Latge J.-P."/>
            <person name="Li W."/>
            <person name="Lord A."/>
            <person name="Lu C."/>
            <person name="Majoros W.H."/>
            <person name="May G.S."/>
            <person name="Miller B.L."/>
            <person name="Mohamoud Y."/>
            <person name="Molina M."/>
            <person name="Monod M."/>
            <person name="Mouyna I."/>
            <person name="Mulligan S."/>
            <person name="Murphy L.D."/>
            <person name="O'Neil S."/>
            <person name="Paulsen I."/>
            <person name="Penalva M.A."/>
            <person name="Pertea M."/>
            <person name="Price C."/>
            <person name="Pritchard B.L."/>
            <person name="Quail M.A."/>
            <person name="Rabbinowitsch E."/>
            <person name="Rawlins N."/>
            <person name="Rajandream M.A."/>
            <person name="Reichard U."/>
            <person name="Renauld H."/>
            <person name="Robson G.D."/>
            <person name="Rodriguez de Cordoba S."/>
            <person name="Rodriguez-Pena J.M."/>
            <person name="Ronning C.M."/>
            <person name="Rutter S."/>
            <person name="Salzberg S.L."/>
            <person name="Sanchez M."/>
            <person name="Sanchez-Ferrero J.C."/>
            <person name="Saunders D."/>
            <person name="Seeger K."/>
            <person name="Squares R."/>
            <person name="Squares S."/>
            <person name="Takeuchi M."/>
            <person name="Tekaia F."/>
            <person name="Turner G."/>
            <person name="Vazquez de Aldana C.R."/>
            <person name="Weidman J."/>
            <person name="White O."/>
            <person name="Woodward J.R."/>
            <person name="Yu J.-H."/>
            <person name="Fraser C.M."/>
            <person name="Galagan J.E."/>
            <person name="Asai K."/>
            <person name="Machida M."/>
            <person name="Hall N."/>
            <person name="Barrell B.G."/>
            <person name="Denning D.W."/>
        </authorList>
    </citation>
    <scope>NUCLEOTIDE SEQUENCE [LARGE SCALE GENOMIC DNA]</scope>
    <source>
        <strain>ATCC MYA-4609 / CBS 101355 / FGSC A1100 / Af293</strain>
    </source>
</reference>
<reference key="2">
    <citation type="journal article" date="2020" name="Elife">
        <title>Targeted induction of a silent fungal gene cluster encoding the bacteria-specific germination inhibitor fumigermin.</title>
        <authorList>
            <person name="Stroe M.C."/>
            <person name="Netzker T."/>
            <person name="Scherlach K."/>
            <person name="Krueger T."/>
            <person name="Hertweck C."/>
            <person name="Valiante V."/>
            <person name="Brakhage A.A."/>
        </authorList>
    </citation>
    <scope>FUNCTION</scope>
    <scope>INDUCTION</scope>
</reference>
<feature type="signal peptide" evidence="2">
    <location>
        <begin position="1"/>
        <end position="21"/>
    </location>
</feature>
<feature type="chain" id="PRO_5004246503" description="FAD-linked oxidoreductase AFUA_1G00980">
    <location>
        <begin position="22"/>
        <end position="496"/>
    </location>
</feature>
<feature type="domain" description="FAD-binding PCMH-type" evidence="4">
    <location>
        <begin position="64"/>
        <end position="243"/>
    </location>
</feature>
<feature type="glycosylation site" description="N-linked (GlcNAc...) asparagine" evidence="3">
    <location>
        <position position="49"/>
    </location>
</feature>
<feature type="glycosylation site" description="N-linked (GlcNAc...) asparagine" evidence="3">
    <location>
        <position position="122"/>
    </location>
</feature>
<feature type="glycosylation site" description="N-linked (GlcNAc...) asparagine" evidence="3">
    <location>
        <position position="205"/>
    </location>
</feature>
<feature type="glycosylation site" description="N-linked (GlcNAc...) asparagine" evidence="3">
    <location>
        <position position="258"/>
    </location>
</feature>
<feature type="glycosylation site" description="N-linked (GlcNAc...) asparagine" evidence="3">
    <location>
        <position position="344"/>
    </location>
</feature>
<feature type="glycosylation site" description="N-linked (GlcNAc...) asparagine" evidence="3">
    <location>
        <position position="351"/>
    </location>
</feature>
<feature type="glycosylation site" description="N-linked (GlcNAc...) asparagine" evidence="3">
    <location>
        <position position="371"/>
    </location>
</feature>
<feature type="glycosylation site" description="N-linked (GlcNAc...) asparagine" evidence="3">
    <location>
        <position position="382"/>
    </location>
</feature>
<proteinExistence type="evidence at transcript level"/>
<comment type="function">
    <text evidence="5 8">FAD-linked oxidoreductase; part of the gene cluster that mediates the biosynthesis of fumigermin that inhibits germination of spores of the inducing S.rapamycinicus, and thus helps the fungus to defend resources in the shared habitat against a bacterial competitor (PubMed:32083553). The partially reducing polyketide synthase fngA alone is sufficient for the production of fumigermin (PubMed:32083553). FgnA catalyzes the condensation of 3 malonyl-CoA units to an acetyl-CoA starter, and 3 methylations to yield fumigermin (PubMed:32083553). It is remarkable that the five cluster genes including fgnA are conserved in distantly related fungi, supporting the assumption of a fumigermin cluster; it is thus possible that originally all five genes were functional, but that the genes encoding tailoring enzymes became inactive from mutations, similar to the case of the fgnA gene in strains A1163 and Af293 (Probable).</text>
</comment>
<comment type="cofactor">
    <cofactor evidence="1">
        <name>FAD</name>
        <dbReference type="ChEBI" id="CHEBI:57692"/>
    </cofactor>
</comment>
<comment type="induction">
    <text evidence="5">Expression is up-regulated during co-cultivation of A.fumigatus with Streptomyces rapamycinicus that triggersthe production of the polyketide fumigermin during the bacterial-fungal interaction.</text>
</comment>
<comment type="similarity">
    <text evidence="7">Belongs to the oxygen-dependent FAD-linked oxidoreductase family.</text>
</comment>
<protein>
    <recommendedName>
        <fullName evidence="6">FAD-linked oxidoreductase AFUA_1G00980</fullName>
        <ecNumber evidence="8">1.-.-.-</ecNumber>
    </recommendedName>
    <alternativeName>
        <fullName evidence="6">Fumigermin biosynthesis cluster protein AFUA_1G00980</fullName>
    </alternativeName>
</protein>
<evidence type="ECO:0000250" key="1">
    <source>
        <dbReference type="UniProtKB" id="Q5BEJ5"/>
    </source>
</evidence>
<evidence type="ECO:0000255" key="2"/>
<evidence type="ECO:0000255" key="3">
    <source>
        <dbReference type="PROSITE-ProRule" id="PRU00498"/>
    </source>
</evidence>
<evidence type="ECO:0000255" key="4">
    <source>
        <dbReference type="PROSITE-ProRule" id="PRU00718"/>
    </source>
</evidence>
<evidence type="ECO:0000269" key="5">
    <source>
    </source>
</evidence>
<evidence type="ECO:0000303" key="6">
    <source>
    </source>
</evidence>
<evidence type="ECO:0000305" key="7"/>
<evidence type="ECO:0000305" key="8">
    <source>
    </source>
</evidence>
<sequence length="496" mass="53643">MRRATLIPLAIWVAGAAAAAAASLPQFPSCDISLANIGLSQNSQIFFPNGSGWESETIRWTKYMAPTYAVSVRPAHVSDVTQVRFATRCKIPFLASSGQHGFDTELAELQNGMEIDLSAFRNVSVDAKKNTLTVGGGVRFMDVFDPVFNAGKEIRTSETDHQVGTGSGACVGMISPTLGGGVGRLSGTHGIISDQLLSVQMVTANGSLVTVSKKENSNLFWGLRGAGGNFGIVVEAVYQVTDLTSEKVVNLDYAFSTNDTGAIIDYLALFGPNMPPKLSFIIAALYNEKLFGGVGDPGCVDPNRGRQSANTIPPSLFQFAVIVSGLYAGPQSEAEQLLAPLLQNATLIKQNISVVPENKLVYAATFGSQGNSTIACSGKGVNRSIFGGAINTYDKATYVDFLKAFGDLVTTNTDLRGSVFFIEHFSNYQVQKIPDHTSAYPWRDITAHLLFNYAWNDPANQQLMLYSARKLPRLRALKKEWDPENVFRFHHPISMS</sequence>
<name>FGND_ASPFU</name>
<accession>Q4WKX2</accession>
<gene>
    <name type="ORF">AFUA_1G00980</name>
</gene>
<keyword id="KW-0274">FAD</keyword>
<keyword id="KW-0285">Flavoprotein</keyword>
<keyword id="KW-0325">Glycoprotein</keyword>
<keyword id="KW-0560">Oxidoreductase</keyword>
<keyword id="KW-1185">Reference proteome</keyword>
<keyword id="KW-0732">Signal</keyword>
<organism>
    <name type="scientific">Aspergillus fumigatus (strain ATCC MYA-4609 / CBS 101355 / FGSC A1100 / Af293)</name>
    <name type="common">Neosartorya fumigata</name>
    <dbReference type="NCBI Taxonomy" id="330879"/>
    <lineage>
        <taxon>Eukaryota</taxon>
        <taxon>Fungi</taxon>
        <taxon>Dikarya</taxon>
        <taxon>Ascomycota</taxon>
        <taxon>Pezizomycotina</taxon>
        <taxon>Eurotiomycetes</taxon>
        <taxon>Eurotiomycetidae</taxon>
        <taxon>Eurotiales</taxon>
        <taxon>Aspergillaceae</taxon>
        <taxon>Aspergillus</taxon>
        <taxon>Aspergillus subgen. Fumigati</taxon>
    </lineage>
</organism>